<name>CTAA_RHOP2</name>
<proteinExistence type="inferred from homology"/>
<organism>
    <name type="scientific">Rhodopseudomonas palustris (strain HaA2)</name>
    <dbReference type="NCBI Taxonomy" id="316058"/>
    <lineage>
        <taxon>Bacteria</taxon>
        <taxon>Pseudomonadati</taxon>
        <taxon>Pseudomonadota</taxon>
        <taxon>Alphaproteobacteria</taxon>
        <taxon>Hyphomicrobiales</taxon>
        <taxon>Nitrobacteraceae</taxon>
        <taxon>Rhodopseudomonas</taxon>
    </lineage>
</organism>
<accession>Q2IWP3</accession>
<dbReference type="EC" id="1.17.99.9" evidence="1"/>
<dbReference type="EMBL" id="CP000250">
    <property type="protein sequence ID" value="ABD07367.1"/>
    <property type="molecule type" value="Genomic_DNA"/>
</dbReference>
<dbReference type="RefSeq" id="WP_011441552.1">
    <property type="nucleotide sequence ID" value="NC_007778.1"/>
</dbReference>
<dbReference type="SMR" id="Q2IWP3"/>
<dbReference type="STRING" id="316058.RPB_2665"/>
<dbReference type="KEGG" id="rpb:RPB_2665"/>
<dbReference type="eggNOG" id="COG1612">
    <property type="taxonomic scope" value="Bacteria"/>
</dbReference>
<dbReference type="HOGENOM" id="CLU_017627_0_0_5"/>
<dbReference type="OrthoDB" id="9793156at2"/>
<dbReference type="UniPathway" id="UPA00269">
    <property type="reaction ID" value="UER00713"/>
</dbReference>
<dbReference type="Proteomes" id="UP000008809">
    <property type="component" value="Chromosome"/>
</dbReference>
<dbReference type="GO" id="GO:0005886">
    <property type="term" value="C:plasma membrane"/>
    <property type="evidence" value="ECO:0007669"/>
    <property type="project" value="UniProtKB-SubCell"/>
</dbReference>
<dbReference type="GO" id="GO:0046872">
    <property type="term" value="F:metal ion binding"/>
    <property type="evidence" value="ECO:0007669"/>
    <property type="project" value="UniProtKB-KW"/>
</dbReference>
<dbReference type="GO" id="GO:0016653">
    <property type="term" value="F:oxidoreductase activity, acting on NAD(P)H, heme protein as acceptor"/>
    <property type="evidence" value="ECO:0007669"/>
    <property type="project" value="InterPro"/>
</dbReference>
<dbReference type="GO" id="GO:0006784">
    <property type="term" value="P:heme A biosynthetic process"/>
    <property type="evidence" value="ECO:0007669"/>
    <property type="project" value="UniProtKB-UniRule"/>
</dbReference>
<dbReference type="HAMAP" id="MF_01665">
    <property type="entry name" value="HemeA_synth_type2"/>
    <property type="match status" value="1"/>
</dbReference>
<dbReference type="InterPro" id="IPR003780">
    <property type="entry name" value="COX15/CtaA_fam"/>
</dbReference>
<dbReference type="InterPro" id="IPR023754">
    <property type="entry name" value="HemeA_Synthase_type2"/>
</dbReference>
<dbReference type="PANTHER" id="PTHR23289">
    <property type="entry name" value="CYTOCHROME C OXIDASE ASSEMBLY PROTEIN COX15"/>
    <property type="match status" value="1"/>
</dbReference>
<dbReference type="PANTHER" id="PTHR23289:SF2">
    <property type="entry name" value="CYTOCHROME C OXIDASE ASSEMBLY PROTEIN COX15 HOMOLOG"/>
    <property type="match status" value="1"/>
</dbReference>
<dbReference type="Pfam" id="PF02628">
    <property type="entry name" value="COX15-CtaA"/>
    <property type="match status" value="1"/>
</dbReference>
<keyword id="KW-1003">Cell membrane</keyword>
<keyword id="KW-0350">Heme biosynthesis</keyword>
<keyword id="KW-0408">Iron</keyword>
<keyword id="KW-0472">Membrane</keyword>
<keyword id="KW-0479">Metal-binding</keyword>
<keyword id="KW-0560">Oxidoreductase</keyword>
<keyword id="KW-1185">Reference proteome</keyword>
<keyword id="KW-0812">Transmembrane</keyword>
<keyword id="KW-1133">Transmembrane helix</keyword>
<feature type="chain" id="PRO_0000349070" description="Heme A synthase">
    <location>
        <begin position="1"/>
        <end position="365"/>
    </location>
</feature>
<feature type="transmembrane region" description="Helical" evidence="1">
    <location>
        <begin position="17"/>
        <end position="37"/>
    </location>
</feature>
<feature type="transmembrane region" description="Helical" evidence="1">
    <location>
        <begin position="107"/>
        <end position="127"/>
    </location>
</feature>
<feature type="transmembrane region" description="Helical" evidence="1">
    <location>
        <begin position="132"/>
        <end position="152"/>
    </location>
</feature>
<feature type="transmembrane region" description="Helical" evidence="1">
    <location>
        <begin position="164"/>
        <end position="184"/>
    </location>
</feature>
<feature type="transmembrane region" description="Helical" evidence="1">
    <location>
        <begin position="203"/>
        <end position="223"/>
    </location>
</feature>
<feature type="transmembrane region" description="Helical" evidence="1">
    <location>
        <begin position="264"/>
        <end position="283"/>
    </location>
</feature>
<feature type="transmembrane region" description="Helical" evidence="1">
    <location>
        <begin position="296"/>
        <end position="316"/>
    </location>
</feature>
<feature type="transmembrane region" description="Helical" evidence="1">
    <location>
        <begin position="320"/>
        <end position="340"/>
    </location>
</feature>
<feature type="binding site" description="axial binding residue" evidence="1">
    <location>
        <position position="267"/>
    </location>
    <ligand>
        <name>heme</name>
        <dbReference type="ChEBI" id="CHEBI:30413"/>
    </ligand>
    <ligandPart>
        <name>Fe</name>
        <dbReference type="ChEBI" id="CHEBI:18248"/>
    </ligandPart>
</feature>
<feature type="binding site" description="axial binding residue" evidence="1">
    <location>
        <position position="327"/>
    </location>
    <ligand>
        <name>heme</name>
        <dbReference type="ChEBI" id="CHEBI:30413"/>
    </ligand>
    <ligandPart>
        <name>Fe</name>
        <dbReference type="ChEBI" id="CHEBI:18248"/>
    </ligandPart>
</feature>
<comment type="function">
    <text evidence="1">Catalyzes the conversion of heme O to heme A by two successive hydroxylations of the methyl group at C8. The first hydroxylation forms heme I, the second hydroxylation results in an unstable dihydroxymethyl group, which spontaneously dehydrates, resulting in the formyl group of heme A.</text>
</comment>
<comment type="catalytic activity">
    <reaction evidence="1">
        <text>Fe(II)-heme o + 2 A + H2O = Fe(II)-heme a + 2 AH2</text>
        <dbReference type="Rhea" id="RHEA:63388"/>
        <dbReference type="ChEBI" id="CHEBI:13193"/>
        <dbReference type="ChEBI" id="CHEBI:15377"/>
        <dbReference type="ChEBI" id="CHEBI:17499"/>
        <dbReference type="ChEBI" id="CHEBI:60530"/>
        <dbReference type="ChEBI" id="CHEBI:61715"/>
        <dbReference type="EC" id="1.17.99.9"/>
    </reaction>
    <physiologicalReaction direction="left-to-right" evidence="1">
        <dbReference type="Rhea" id="RHEA:63389"/>
    </physiologicalReaction>
</comment>
<comment type="cofactor">
    <cofactor evidence="1">
        <name>heme b</name>
        <dbReference type="ChEBI" id="CHEBI:60344"/>
    </cofactor>
</comment>
<comment type="pathway">
    <text evidence="1">Porphyrin-containing compound metabolism; heme A biosynthesis; heme A from heme O: step 1/1.</text>
</comment>
<comment type="subunit">
    <text evidence="1">Interacts with CtaB.</text>
</comment>
<comment type="subcellular location">
    <subcellularLocation>
        <location evidence="1">Cell membrane</location>
        <topology evidence="1">Multi-pass membrane protein</topology>
    </subcellularLocation>
</comment>
<comment type="similarity">
    <text evidence="1">Belongs to the COX15/CtaA family. Type 2 subfamily.</text>
</comment>
<evidence type="ECO:0000255" key="1">
    <source>
        <dbReference type="HAMAP-Rule" id="MF_01665"/>
    </source>
</evidence>
<gene>
    <name evidence="1" type="primary">ctaA</name>
    <name type="ordered locus">RPB_2665</name>
</gene>
<reference key="1">
    <citation type="submission" date="2006-01" db="EMBL/GenBank/DDBJ databases">
        <title>Complete sequence of Rhodopseudomonas palustris HaA2.</title>
        <authorList>
            <consortium name="US DOE Joint Genome Institute"/>
            <person name="Copeland A."/>
            <person name="Lucas S."/>
            <person name="Lapidus A."/>
            <person name="Barry K."/>
            <person name="Detter J.C."/>
            <person name="Glavina T."/>
            <person name="Hammon N."/>
            <person name="Israni S."/>
            <person name="Pitluck S."/>
            <person name="Chain P."/>
            <person name="Malfatti S."/>
            <person name="Shin M."/>
            <person name="Vergez L."/>
            <person name="Schmutz J."/>
            <person name="Larimer F."/>
            <person name="Land M."/>
            <person name="Hauser L."/>
            <person name="Pelletier D.A."/>
            <person name="Kyrpides N."/>
            <person name="Anderson I."/>
            <person name="Oda Y."/>
            <person name="Harwood C.S."/>
            <person name="Richardson P."/>
        </authorList>
    </citation>
    <scope>NUCLEOTIDE SEQUENCE [LARGE SCALE GENOMIC DNA]</scope>
    <source>
        <strain>HaA2</strain>
    </source>
</reference>
<sequence>MTAAAESERLRPPRVRAVRIWLTVVAALIAVMVLVGGATRLTESGLSIVEWKPVTGTLPPLTDAQWHAAFEGYKTIPQYRELNAGMTLYEFKTIFWWEWSHRLLGRVIGIAYLLPFLWFLWRGAIGPQWKRALWGIFALGALQGAVGWWMVASGLSQRTEVSQVRLAVHLTLALIIYAAIVWTLRRLADKPPIPAAARLKVTAIALLALTLLQLFLGALVAGLRAGRVFNTWPLIDGALIPSAERLWFEQPWWKNLFDNHLTVQFDHRMMAYALWALAAWHAIDAVRSRAGGAASGALWLFAALSLQAVLGILTVLHATPIGLALAHQAVGIVVLTLAVLQVERLTAPRLKALPRAMPVPVGQPG</sequence>
<protein>
    <recommendedName>
        <fullName evidence="1">Heme A synthase</fullName>
        <shortName evidence="1">HAS</shortName>
        <ecNumber evidence="1">1.17.99.9</ecNumber>
    </recommendedName>
    <alternativeName>
        <fullName evidence="1">Cytochrome aa3-controlling protein</fullName>
    </alternativeName>
</protein>